<protein>
    <recommendedName>
        <fullName>Surface presentation of antigens protein SpaQ</fullName>
    </recommendedName>
</protein>
<reference key="1">
    <citation type="journal article" date="1995" name="Proc. Natl. Acad. Sci. U.S.A.">
        <title>Relationship between evolutionary rate and cellular location among the Inv/Spa invasion proteins of Salmonella enterica.</title>
        <authorList>
            <person name="Li J."/>
            <person name="Ochman H."/>
            <person name="Groisman E.A."/>
            <person name="Boyd E.F."/>
            <person name="Solomon F."/>
            <person name="Nelson K."/>
            <person name="Selander R.K."/>
        </authorList>
    </citation>
    <scope>NUCLEOTIDE SEQUENCE [GENOMIC DNA]</scope>
    <source>
        <strain>s2978 / Serovar IIIb</strain>
        <strain>s2979 / Serovar IIIb</strain>
        <strain>s2980 / Serovar IIIa</strain>
        <strain>s2983 / Serovar IIIa</strain>
        <strain>s2985 / Serovar II</strain>
        <strain>s2993 / Serovar II</strain>
        <strain>s2995 / Serovar VI</strain>
        <strain>s3013 / Serovar VII</strain>
        <strain>s3014 / Serovar VII</strain>
        <strain>s3015 / Serovar IV</strain>
        <strain>s3027 / Serovar IV</strain>
        <strain>s3041 / Serovar V</strain>
        <strain>s3044 / Serovar V</strain>
        <strain>s3057 / Serovar VI</strain>
        <strain>s53</strain>
    </source>
</reference>
<sequence length="86" mass="9359">MDDLVFAGNKALYLVLILSGWPTIVATIIGLLVGLFQTVTQLQEQTLPFGIKLLGVCLCLFLLSGWYGEVLLSYGRQVIFLALAKG</sequence>
<gene>
    <name type="primary">spaQ</name>
</gene>
<name>SPAQ_SALEN</name>
<evidence type="ECO:0000255" key="1"/>
<evidence type="ECO:0000305" key="2"/>
<accession>P0A1M0</accession>
<accession>P40704</accession>
<accession>Q54011</accession>
<accession>Q54013</accession>
<accession>Q57117</accession>
<accession>Q57533</accession>
<dbReference type="EMBL" id="U29348">
    <property type="protein sequence ID" value="AAC43940.1"/>
    <property type="molecule type" value="Genomic_DNA"/>
</dbReference>
<dbReference type="EMBL" id="U29349">
    <property type="protein sequence ID" value="AAC43943.1"/>
    <property type="molecule type" value="Genomic_DNA"/>
</dbReference>
<dbReference type="EMBL" id="U29350">
    <property type="protein sequence ID" value="AAC43946.1"/>
    <property type="molecule type" value="Genomic_DNA"/>
</dbReference>
<dbReference type="EMBL" id="U29351">
    <property type="protein sequence ID" value="AAC43949.1"/>
    <property type="molecule type" value="Genomic_DNA"/>
</dbReference>
<dbReference type="EMBL" id="U29352">
    <property type="protein sequence ID" value="AAC43952.1"/>
    <property type="molecule type" value="Genomic_DNA"/>
</dbReference>
<dbReference type="EMBL" id="U29353">
    <property type="protein sequence ID" value="AAC43955.1"/>
    <property type="molecule type" value="Genomic_DNA"/>
</dbReference>
<dbReference type="EMBL" id="U29354">
    <property type="protein sequence ID" value="AAC43958.1"/>
    <property type="molecule type" value="Genomic_DNA"/>
</dbReference>
<dbReference type="EMBL" id="U29355">
    <property type="protein sequence ID" value="AAC43961.1"/>
    <property type="molecule type" value="Genomic_DNA"/>
</dbReference>
<dbReference type="EMBL" id="U29356">
    <property type="protein sequence ID" value="AAC43838.1"/>
    <property type="molecule type" value="Genomic_DNA"/>
</dbReference>
<dbReference type="EMBL" id="U29357">
    <property type="protein sequence ID" value="AAC43841.1"/>
    <property type="molecule type" value="Genomic_DNA"/>
</dbReference>
<dbReference type="EMBL" id="U29358">
    <property type="protein sequence ID" value="AAC43844.1"/>
    <property type="molecule type" value="Genomic_DNA"/>
</dbReference>
<dbReference type="EMBL" id="U29359">
    <property type="protein sequence ID" value="AAC43847.1"/>
    <property type="molecule type" value="Genomic_DNA"/>
</dbReference>
<dbReference type="EMBL" id="U29360">
    <property type="protein sequence ID" value="AAC43850.1"/>
    <property type="molecule type" value="Genomic_DNA"/>
</dbReference>
<dbReference type="EMBL" id="U29361">
    <property type="protein sequence ID" value="AAC43853.1"/>
    <property type="molecule type" value="Genomic_DNA"/>
</dbReference>
<dbReference type="EMBL" id="U29365">
    <property type="protein sequence ID" value="AAC43856.1"/>
    <property type="molecule type" value="Genomic_DNA"/>
</dbReference>
<dbReference type="RefSeq" id="WP_000342503.1">
    <property type="nucleotide sequence ID" value="NZ_WIDC01000145.1"/>
</dbReference>
<dbReference type="SMR" id="P0A1M0"/>
<dbReference type="TCDB" id="3.A.6.1.3">
    <property type="family name" value="the type iii (virulence-related) secretory pathway (iiisp) family"/>
</dbReference>
<dbReference type="PATRIC" id="fig|149539.316.peg.2933"/>
<dbReference type="OMA" id="GWYGETL"/>
<dbReference type="GO" id="GO:0005886">
    <property type="term" value="C:plasma membrane"/>
    <property type="evidence" value="ECO:0007669"/>
    <property type="project" value="UniProtKB-SubCell"/>
</dbReference>
<dbReference type="GO" id="GO:0009306">
    <property type="term" value="P:protein secretion"/>
    <property type="evidence" value="ECO:0007669"/>
    <property type="project" value="InterPro"/>
</dbReference>
<dbReference type="InterPro" id="IPR002191">
    <property type="entry name" value="Bac_export_3"/>
</dbReference>
<dbReference type="InterPro" id="IPR006306">
    <property type="entry name" value="T3SS_HrpO"/>
</dbReference>
<dbReference type="NCBIfam" id="TIGR01403">
    <property type="entry name" value="fliQ_rel_III"/>
    <property type="match status" value="1"/>
</dbReference>
<dbReference type="NCBIfam" id="NF011861">
    <property type="entry name" value="PRK15333.1"/>
    <property type="match status" value="1"/>
</dbReference>
<dbReference type="PANTHER" id="PTHR34040">
    <property type="entry name" value="FLAGELLAR BIOSYNTHETIC PROTEIN FLIQ"/>
    <property type="match status" value="1"/>
</dbReference>
<dbReference type="PANTHER" id="PTHR34040:SF7">
    <property type="entry name" value="SURFACE PRESENTATION OF ANTIGENS PROTEIN SPAQ"/>
    <property type="match status" value="1"/>
</dbReference>
<dbReference type="Pfam" id="PF01313">
    <property type="entry name" value="Bac_export_3"/>
    <property type="match status" value="1"/>
</dbReference>
<dbReference type="PRINTS" id="PR00952">
    <property type="entry name" value="TYPE3IMQPROT"/>
</dbReference>
<organism>
    <name type="scientific">Salmonella enteritidis</name>
    <dbReference type="NCBI Taxonomy" id="149539"/>
    <lineage>
        <taxon>Bacteria</taxon>
        <taxon>Pseudomonadati</taxon>
        <taxon>Pseudomonadota</taxon>
        <taxon>Gammaproteobacteria</taxon>
        <taxon>Enterobacterales</taxon>
        <taxon>Enterobacteriaceae</taxon>
        <taxon>Salmonella</taxon>
    </lineage>
</organism>
<keyword id="KW-1003">Cell membrane</keyword>
<keyword id="KW-0472">Membrane</keyword>
<keyword id="KW-0812">Transmembrane</keyword>
<keyword id="KW-1133">Transmembrane helix</keyword>
<keyword id="KW-0843">Virulence</keyword>
<comment type="function">
    <text>Involved in a secretory pathway responsible for the surface presentation of determinants needed for the entry of Salmonella species into mammalian cells.</text>
</comment>
<comment type="subcellular location">
    <subcellularLocation>
        <location evidence="2">Cell membrane</location>
        <topology evidence="2">Multi-pass membrane protein</topology>
    </subcellularLocation>
</comment>
<comment type="similarity">
    <text evidence="2">Belongs to the FliQ/MopD/SpaQ family.</text>
</comment>
<proteinExistence type="inferred from homology"/>
<feature type="chain" id="PRO_0000129104" description="Surface presentation of antigens protein SpaQ">
    <location>
        <begin position="1"/>
        <end position="86"/>
    </location>
</feature>
<feature type="transmembrane region" description="Helical" evidence="1">
    <location>
        <begin position="16"/>
        <end position="36"/>
    </location>
</feature>
<feature type="transmembrane region" description="Helical" evidence="1">
    <location>
        <begin position="53"/>
        <end position="73"/>
    </location>
</feature>
<feature type="sequence variant" description="In strain: s3041 / Serovar V and s3044 /Serovar V.">
    <original>I</original>
    <variation>V</variation>
    <location>
        <position position="28"/>
    </location>
</feature>
<feature type="sequence variant" description="In strain: s2995 / Serovar VI and s3057 /Serovar VI.">
    <original>G</original>
    <variation>A</variation>
    <location>
        <position position="75"/>
    </location>
</feature>